<dbReference type="EC" id="5.6.1.7" evidence="1"/>
<dbReference type="EMBL" id="CP000241">
    <property type="protein sequence ID" value="ABF84077.1"/>
    <property type="molecule type" value="Genomic_DNA"/>
</dbReference>
<dbReference type="RefSeq" id="WP_001040278.1">
    <property type="nucleotide sequence ID" value="NC_008086.1"/>
</dbReference>
<dbReference type="SMR" id="Q1CVE5"/>
<dbReference type="KEGG" id="hpa:HPAG1_0010"/>
<dbReference type="HOGENOM" id="CLU_016503_3_0_7"/>
<dbReference type="GO" id="GO:0005737">
    <property type="term" value="C:cytoplasm"/>
    <property type="evidence" value="ECO:0007669"/>
    <property type="project" value="UniProtKB-SubCell"/>
</dbReference>
<dbReference type="GO" id="GO:0005524">
    <property type="term" value="F:ATP binding"/>
    <property type="evidence" value="ECO:0007669"/>
    <property type="project" value="UniProtKB-UniRule"/>
</dbReference>
<dbReference type="GO" id="GO:0140662">
    <property type="term" value="F:ATP-dependent protein folding chaperone"/>
    <property type="evidence" value="ECO:0007669"/>
    <property type="project" value="InterPro"/>
</dbReference>
<dbReference type="GO" id="GO:0016853">
    <property type="term" value="F:isomerase activity"/>
    <property type="evidence" value="ECO:0007669"/>
    <property type="project" value="UniProtKB-KW"/>
</dbReference>
<dbReference type="GO" id="GO:0051082">
    <property type="term" value="F:unfolded protein binding"/>
    <property type="evidence" value="ECO:0007669"/>
    <property type="project" value="UniProtKB-UniRule"/>
</dbReference>
<dbReference type="GO" id="GO:0042026">
    <property type="term" value="P:protein refolding"/>
    <property type="evidence" value="ECO:0007669"/>
    <property type="project" value="UniProtKB-UniRule"/>
</dbReference>
<dbReference type="CDD" id="cd03344">
    <property type="entry name" value="GroEL"/>
    <property type="match status" value="1"/>
</dbReference>
<dbReference type="FunFam" id="3.50.7.10:FF:000001">
    <property type="entry name" value="60 kDa chaperonin"/>
    <property type="match status" value="1"/>
</dbReference>
<dbReference type="Gene3D" id="3.50.7.10">
    <property type="entry name" value="GroEL"/>
    <property type="match status" value="1"/>
</dbReference>
<dbReference type="Gene3D" id="1.10.560.10">
    <property type="entry name" value="GroEL-like equatorial domain"/>
    <property type="match status" value="1"/>
</dbReference>
<dbReference type="Gene3D" id="3.30.260.10">
    <property type="entry name" value="TCP-1-like chaperonin intermediate domain"/>
    <property type="match status" value="1"/>
</dbReference>
<dbReference type="HAMAP" id="MF_00600">
    <property type="entry name" value="CH60"/>
    <property type="match status" value="1"/>
</dbReference>
<dbReference type="InterPro" id="IPR018370">
    <property type="entry name" value="Chaperonin_Cpn60_CS"/>
</dbReference>
<dbReference type="InterPro" id="IPR001844">
    <property type="entry name" value="Cpn60/GroEL"/>
</dbReference>
<dbReference type="InterPro" id="IPR002423">
    <property type="entry name" value="Cpn60/GroEL/TCP-1"/>
</dbReference>
<dbReference type="InterPro" id="IPR027409">
    <property type="entry name" value="GroEL-like_apical_dom_sf"/>
</dbReference>
<dbReference type="InterPro" id="IPR027413">
    <property type="entry name" value="GROEL-like_equatorial_sf"/>
</dbReference>
<dbReference type="InterPro" id="IPR027410">
    <property type="entry name" value="TCP-1-like_intermed_sf"/>
</dbReference>
<dbReference type="NCBIfam" id="TIGR02348">
    <property type="entry name" value="GroEL"/>
    <property type="match status" value="1"/>
</dbReference>
<dbReference type="NCBIfam" id="NF000592">
    <property type="entry name" value="PRK00013.1"/>
    <property type="match status" value="1"/>
</dbReference>
<dbReference type="NCBIfam" id="NF009487">
    <property type="entry name" value="PRK12849.1"/>
    <property type="match status" value="1"/>
</dbReference>
<dbReference type="NCBIfam" id="NF009488">
    <property type="entry name" value="PRK12850.1"/>
    <property type="match status" value="1"/>
</dbReference>
<dbReference type="NCBIfam" id="NF009489">
    <property type="entry name" value="PRK12851.1"/>
    <property type="match status" value="1"/>
</dbReference>
<dbReference type="PANTHER" id="PTHR45633">
    <property type="entry name" value="60 KDA HEAT SHOCK PROTEIN, MITOCHONDRIAL"/>
    <property type="match status" value="1"/>
</dbReference>
<dbReference type="Pfam" id="PF00118">
    <property type="entry name" value="Cpn60_TCP1"/>
    <property type="match status" value="1"/>
</dbReference>
<dbReference type="PRINTS" id="PR00298">
    <property type="entry name" value="CHAPERONIN60"/>
</dbReference>
<dbReference type="SUPFAM" id="SSF52029">
    <property type="entry name" value="GroEL apical domain-like"/>
    <property type="match status" value="1"/>
</dbReference>
<dbReference type="SUPFAM" id="SSF48592">
    <property type="entry name" value="GroEL equatorial domain-like"/>
    <property type="match status" value="2"/>
</dbReference>
<dbReference type="PROSITE" id="PS00296">
    <property type="entry name" value="CHAPERONINS_CPN60"/>
    <property type="match status" value="1"/>
</dbReference>
<feature type="chain" id="PRO_0000256918" description="Chaperonin GroEL">
    <location>
        <begin position="1"/>
        <end position="546"/>
    </location>
</feature>
<feature type="binding site" evidence="1">
    <location>
        <begin position="29"/>
        <end position="32"/>
    </location>
    <ligand>
        <name>ATP</name>
        <dbReference type="ChEBI" id="CHEBI:30616"/>
    </ligand>
</feature>
<feature type="binding site" evidence="1">
    <location>
        <position position="50"/>
    </location>
    <ligand>
        <name>ATP</name>
        <dbReference type="ChEBI" id="CHEBI:30616"/>
    </ligand>
</feature>
<feature type="binding site" evidence="1">
    <location>
        <begin position="86"/>
        <end position="90"/>
    </location>
    <ligand>
        <name>ATP</name>
        <dbReference type="ChEBI" id="CHEBI:30616"/>
    </ligand>
</feature>
<feature type="binding site" evidence="1">
    <location>
        <position position="414"/>
    </location>
    <ligand>
        <name>ATP</name>
        <dbReference type="ChEBI" id="CHEBI:30616"/>
    </ligand>
</feature>
<feature type="binding site" evidence="1">
    <location>
        <position position="492"/>
    </location>
    <ligand>
        <name>ATP</name>
        <dbReference type="ChEBI" id="CHEBI:30616"/>
    </ligand>
</feature>
<keyword id="KW-0067">ATP-binding</keyword>
<keyword id="KW-0143">Chaperone</keyword>
<keyword id="KW-0963">Cytoplasm</keyword>
<keyword id="KW-0413">Isomerase</keyword>
<keyword id="KW-0547">Nucleotide-binding</keyword>
<sequence>MAKEIKFSDSARNLLFEGVRQLHDAVKVTMGPRGRNVLIQKSYGAPSITKDGVSVAKEIELSCPVANMGAQLVKEVASKTADAAGDGTTTATVLAYSIFKEGLRNITAGANPIEVKRGMDKAAEAIINELKKASKKVGGKEEITQVATISANSDHNIGKLIADAMEKVGKDGVITVEEAKGIEDELDVVEGMQFDRGYLSPYFVTNAEKMTAQLDNAYILLTDKKISSMKDILPLLEKTMKEGKPLLIIAEDIEGEALTTLVVNKLRGVLNIAAVKAPGFGDRRKEMLKDIAILTGGQVISEELGLSLENAEVEFLGKAGRIVIDKDNTTIVDGKGHSDDVKDRVAQIKTQIASTTSDYDKEKLQERLAKLSGGVAVIKVGAASEVEMKEKKDRVDDALSATKAAVEEGIVIGGGAALIRAAQKVHLNLHDDEKVGYEIIMRAIKAPLAQIAINAGYDGGVVVNEVEKHEGHFGFNASNGKYVDMFKEGIIDPLKVERIALQNAVSVSSLLLTTEATVHEIKEEKAAPAMPDMGGMGGMGGMGGMM</sequence>
<protein>
    <recommendedName>
        <fullName evidence="1">Chaperonin GroEL</fullName>
        <ecNumber evidence="1">5.6.1.7</ecNumber>
    </recommendedName>
    <alternativeName>
        <fullName evidence="1">60 kDa chaperonin</fullName>
    </alternativeName>
    <alternativeName>
        <fullName evidence="1">Chaperonin-60</fullName>
        <shortName evidence="1">Cpn60</shortName>
    </alternativeName>
</protein>
<organism>
    <name type="scientific">Helicobacter pylori (strain HPAG1)</name>
    <dbReference type="NCBI Taxonomy" id="357544"/>
    <lineage>
        <taxon>Bacteria</taxon>
        <taxon>Pseudomonadati</taxon>
        <taxon>Campylobacterota</taxon>
        <taxon>Epsilonproteobacteria</taxon>
        <taxon>Campylobacterales</taxon>
        <taxon>Helicobacteraceae</taxon>
        <taxon>Helicobacter</taxon>
    </lineage>
</organism>
<proteinExistence type="inferred from homology"/>
<reference key="1">
    <citation type="journal article" date="2006" name="Proc. Natl. Acad. Sci. U.S.A.">
        <title>The complete genome sequence of a chronic atrophic gastritis Helicobacter pylori strain: evolution during disease progression.</title>
        <authorList>
            <person name="Oh J.D."/>
            <person name="Kling-Baeckhed H."/>
            <person name="Giannakis M."/>
            <person name="Xu J."/>
            <person name="Fulton R.S."/>
            <person name="Fulton L.A."/>
            <person name="Cordum H.S."/>
            <person name="Wang C."/>
            <person name="Elliott G."/>
            <person name="Edwards J."/>
            <person name="Mardis E.R."/>
            <person name="Engstrand L.G."/>
            <person name="Gordon J.I."/>
        </authorList>
    </citation>
    <scope>NUCLEOTIDE SEQUENCE [LARGE SCALE GENOMIC DNA]</scope>
    <source>
        <strain>HPAG1</strain>
    </source>
</reference>
<gene>
    <name evidence="1" type="primary">groEL</name>
    <name evidence="1" type="synonym">groL</name>
    <name type="ordered locus">HPAG1_0010</name>
</gene>
<accession>Q1CVE5</accession>
<comment type="function">
    <text evidence="1">Together with its co-chaperonin GroES, plays an essential role in assisting protein folding. The GroEL-GroES system forms a nano-cage that allows encapsulation of the non-native substrate proteins and provides a physical environment optimized to promote and accelerate protein folding.</text>
</comment>
<comment type="catalytic activity">
    <reaction evidence="1">
        <text>ATP + H2O + a folded polypeptide = ADP + phosphate + an unfolded polypeptide.</text>
        <dbReference type="EC" id="5.6.1.7"/>
    </reaction>
</comment>
<comment type="subunit">
    <text evidence="1">Forms a cylinder of 14 subunits composed of two heptameric rings stacked back-to-back. Interacts with the co-chaperonin GroES.</text>
</comment>
<comment type="subcellular location">
    <subcellularLocation>
        <location evidence="1">Cytoplasm</location>
    </subcellularLocation>
</comment>
<comment type="similarity">
    <text evidence="1">Belongs to the chaperonin (HSP60) family.</text>
</comment>
<name>CH60_HELPH</name>
<evidence type="ECO:0000255" key="1">
    <source>
        <dbReference type="HAMAP-Rule" id="MF_00600"/>
    </source>
</evidence>